<reference key="1">
    <citation type="journal article" date="2011" name="PLoS Genet.">
        <title>Genomic analysis of the necrotrophic fungal pathogens Sclerotinia sclerotiorum and Botrytis cinerea.</title>
        <authorList>
            <person name="Amselem J."/>
            <person name="Cuomo C.A."/>
            <person name="van Kan J.A.L."/>
            <person name="Viaud M."/>
            <person name="Benito E.P."/>
            <person name="Couloux A."/>
            <person name="Coutinho P.M."/>
            <person name="de Vries R.P."/>
            <person name="Dyer P.S."/>
            <person name="Fillinger S."/>
            <person name="Fournier E."/>
            <person name="Gout L."/>
            <person name="Hahn M."/>
            <person name="Kohn L."/>
            <person name="Lapalu N."/>
            <person name="Plummer K.M."/>
            <person name="Pradier J.-M."/>
            <person name="Quevillon E."/>
            <person name="Sharon A."/>
            <person name="Simon A."/>
            <person name="ten Have A."/>
            <person name="Tudzynski B."/>
            <person name="Tudzynski P."/>
            <person name="Wincker P."/>
            <person name="Andrew M."/>
            <person name="Anthouard V."/>
            <person name="Beever R.E."/>
            <person name="Beffa R."/>
            <person name="Benoit I."/>
            <person name="Bouzid O."/>
            <person name="Brault B."/>
            <person name="Chen Z."/>
            <person name="Choquer M."/>
            <person name="Collemare J."/>
            <person name="Cotton P."/>
            <person name="Danchin E.G."/>
            <person name="Da Silva C."/>
            <person name="Gautier A."/>
            <person name="Giraud C."/>
            <person name="Giraud T."/>
            <person name="Gonzalez C."/>
            <person name="Grossetete S."/>
            <person name="Gueldener U."/>
            <person name="Henrissat B."/>
            <person name="Howlett B.J."/>
            <person name="Kodira C."/>
            <person name="Kretschmer M."/>
            <person name="Lappartient A."/>
            <person name="Leroch M."/>
            <person name="Levis C."/>
            <person name="Mauceli E."/>
            <person name="Neuveglise C."/>
            <person name="Oeser B."/>
            <person name="Pearson M."/>
            <person name="Poulain J."/>
            <person name="Poussereau N."/>
            <person name="Quesneville H."/>
            <person name="Rascle C."/>
            <person name="Schumacher J."/>
            <person name="Segurens B."/>
            <person name="Sexton A."/>
            <person name="Silva E."/>
            <person name="Sirven C."/>
            <person name="Soanes D.M."/>
            <person name="Talbot N.J."/>
            <person name="Templeton M."/>
            <person name="Yandava C."/>
            <person name="Yarden O."/>
            <person name="Zeng Q."/>
            <person name="Rollins J.A."/>
            <person name="Lebrun M.-H."/>
            <person name="Dickman M."/>
        </authorList>
    </citation>
    <scope>NUCLEOTIDE SEQUENCE [LARGE SCALE GENOMIC DNA]</scope>
    <source>
        <strain>B05.10</strain>
    </source>
</reference>
<reference key="2">
    <citation type="journal article" date="2012" name="Eukaryot. Cell">
        <title>Genome update of Botrytis cinerea strains B05.10 and T4.</title>
        <authorList>
            <person name="Staats M."/>
            <person name="van Kan J.A.L."/>
        </authorList>
    </citation>
    <scope>NUCLEOTIDE SEQUENCE [LARGE SCALE GENOMIC DNA]</scope>
    <scope>GENOME REANNOTATION</scope>
    <source>
        <strain>B05.10</strain>
    </source>
</reference>
<reference key="3">
    <citation type="journal article" date="2017" name="Mol. Plant Pathol.">
        <title>A gapless genome sequence of the fungus Botrytis cinerea.</title>
        <authorList>
            <person name="van Kan J.A.L."/>
            <person name="Stassen J.H.M."/>
            <person name="Mosbach A."/>
            <person name="van der Lee T.A.J."/>
            <person name="Faino L."/>
            <person name="Farmer A.D."/>
            <person name="Papasotiriou D.G."/>
            <person name="Zhou S."/>
            <person name="Seidl M.F."/>
            <person name="Cottam E."/>
            <person name="Edel D."/>
            <person name="Hahn M."/>
            <person name="Schwartz D.C."/>
            <person name="Dietrich R.A."/>
            <person name="Widdison S."/>
            <person name="Scalliet G."/>
        </authorList>
    </citation>
    <scope>NUCLEOTIDE SEQUENCE [LARGE SCALE GENOMIC DNA]</scope>
    <scope>GENOME REANNOTATION</scope>
    <source>
        <strain>B05.10</strain>
    </source>
</reference>
<accession>A6RMZ2</accession>
<accession>A0A384JI31</accession>
<organism>
    <name type="scientific">Botryotinia fuckeliana (strain B05.10)</name>
    <name type="common">Noble rot fungus</name>
    <name type="synonym">Botrytis cinerea</name>
    <dbReference type="NCBI Taxonomy" id="332648"/>
    <lineage>
        <taxon>Eukaryota</taxon>
        <taxon>Fungi</taxon>
        <taxon>Dikarya</taxon>
        <taxon>Ascomycota</taxon>
        <taxon>Pezizomycotina</taxon>
        <taxon>Leotiomycetes</taxon>
        <taxon>Helotiales</taxon>
        <taxon>Sclerotiniaceae</taxon>
        <taxon>Botrytis</taxon>
    </lineage>
</organism>
<evidence type="ECO:0000250" key="1">
    <source>
        <dbReference type="UniProtKB" id="P25808"/>
    </source>
</evidence>
<evidence type="ECO:0000255" key="2"/>
<evidence type="ECO:0000255" key="3">
    <source>
        <dbReference type="PROSITE-ProRule" id="PRU00541"/>
    </source>
</evidence>
<evidence type="ECO:0000255" key="4">
    <source>
        <dbReference type="PROSITE-ProRule" id="PRU00542"/>
    </source>
</evidence>
<evidence type="ECO:0000256" key="5">
    <source>
        <dbReference type="SAM" id="MobiDB-lite"/>
    </source>
</evidence>
<evidence type="ECO:0000305" key="6"/>
<proteinExistence type="inferred from homology"/>
<dbReference type="EC" id="3.6.4.13" evidence="1"/>
<dbReference type="EMBL" id="CP009809">
    <property type="protein sequence ID" value="ATZ50200.1"/>
    <property type="molecule type" value="Genomic_DNA"/>
</dbReference>
<dbReference type="SMR" id="A6RMZ2"/>
<dbReference type="EnsemblFungi" id="Bcin05g05740.1">
    <property type="protein sequence ID" value="Bcin05p05740.1"/>
    <property type="gene ID" value="Bcin05g05740"/>
</dbReference>
<dbReference type="GeneID" id="5440288"/>
<dbReference type="KEGG" id="bfu:BCIN_05g05740"/>
<dbReference type="VEuPathDB" id="FungiDB:Bcin05g05740"/>
<dbReference type="OMA" id="AYKEHEC"/>
<dbReference type="OrthoDB" id="7396459at2759"/>
<dbReference type="Proteomes" id="UP000001798">
    <property type="component" value="Chromosome bcin05"/>
</dbReference>
<dbReference type="GO" id="GO:0030686">
    <property type="term" value="C:90S preribosome"/>
    <property type="evidence" value="ECO:0007669"/>
    <property type="project" value="EnsemblFungi"/>
</dbReference>
<dbReference type="GO" id="GO:0005730">
    <property type="term" value="C:nucleolus"/>
    <property type="evidence" value="ECO:0007669"/>
    <property type="project" value="UniProtKB-SubCell"/>
</dbReference>
<dbReference type="GO" id="GO:0005654">
    <property type="term" value="C:nucleoplasm"/>
    <property type="evidence" value="ECO:0007669"/>
    <property type="project" value="EnsemblFungi"/>
</dbReference>
<dbReference type="GO" id="GO:0030687">
    <property type="term" value="C:preribosome, large subunit precursor"/>
    <property type="evidence" value="ECO:0007669"/>
    <property type="project" value="EnsemblFungi"/>
</dbReference>
<dbReference type="GO" id="GO:0005524">
    <property type="term" value="F:ATP binding"/>
    <property type="evidence" value="ECO:0007669"/>
    <property type="project" value="UniProtKB-KW"/>
</dbReference>
<dbReference type="GO" id="GO:0016887">
    <property type="term" value="F:ATP hydrolysis activity"/>
    <property type="evidence" value="ECO:0007669"/>
    <property type="project" value="RHEA"/>
</dbReference>
<dbReference type="GO" id="GO:0003723">
    <property type="term" value="F:RNA binding"/>
    <property type="evidence" value="ECO:0007669"/>
    <property type="project" value="UniProtKB-KW"/>
</dbReference>
<dbReference type="GO" id="GO:0003724">
    <property type="term" value="F:RNA helicase activity"/>
    <property type="evidence" value="ECO:0007669"/>
    <property type="project" value="UniProtKB-EC"/>
</dbReference>
<dbReference type="GO" id="GO:1902626">
    <property type="term" value="P:assembly of large subunit precursor of preribosome"/>
    <property type="evidence" value="ECO:0007669"/>
    <property type="project" value="EnsemblFungi"/>
</dbReference>
<dbReference type="GO" id="GO:0000470">
    <property type="term" value="P:maturation of LSU-rRNA"/>
    <property type="evidence" value="ECO:0007669"/>
    <property type="project" value="EnsemblFungi"/>
</dbReference>
<dbReference type="CDD" id="cd17960">
    <property type="entry name" value="DEADc_DDX55"/>
    <property type="match status" value="1"/>
</dbReference>
<dbReference type="CDD" id="cd18787">
    <property type="entry name" value="SF2_C_DEAD"/>
    <property type="match status" value="1"/>
</dbReference>
<dbReference type="Gene3D" id="3.40.50.300">
    <property type="entry name" value="P-loop containing nucleotide triphosphate hydrolases"/>
    <property type="match status" value="2"/>
</dbReference>
<dbReference type="InterPro" id="IPR056330">
    <property type="entry name" value="CTT_SPB4"/>
</dbReference>
<dbReference type="InterPro" id="IPR011545">
    <property type="entry name" value="DEAD/DEAH_box_helicase_dom"/>
</dbReference>
<dbReference type="InterPro" id="IPR014001">
    <property type="entry name" value="Helicase_ATP-bd"/>
</dbReference>
<dbReference type="InterPro" id="IPR001650">
    <property type="entry name" value="Helicase_C-like"/>
</dbReference>
<dbReference type="InterPro" id="IPR027417">
    <property type="entry name" value="P-loop_NTPase"/>
</dbReference>
<dbReference type="InterPro" id="IPR000629">
    <property type="entry name" value="RNA-helicase_DEAD-box_CS"/>
</dbReference>
<dbReference type="InterPro" id="IPR014014">
    <property type="entry name" value="RNA_helicase_DEAD_Q_motif"/>
</dbReference>
<dbReference type="InterPro" id="IPR025313">
    <property type="entry name" value="SPB4-like_CTE"/>
</dbReference>
<dbReference type="PANTHER" id="PTHR24031">
    <property type="entry name" value="RNA HELICASE"/>
    <property type="match status" value="1"/>
</dbReference>
<dbReference type="Pfam" id="PF13959">
    <property type="entry name" value="CTE_SPB4"/>
    <property type="match status" value="1"/>
</dbReference>
<dbReference type="Pfam" id="PF23681">
    <property type="entry name" value="CTT_SPB4"/>
    <property type="match status" value="1"/>
</dbReference>
<dbReference type="Pfam" id="PF00270">
    <property type="entry name" value="DEAD"/>
    <property type="match status" value="1"/>
</dbReference>
<dbReference type="Pfam" id="PF00271">
    <property type="entry name" value="Helicase_C"/>
    <property type="match status" value="1"/>
</dbReference>
<dbReference type="SMART" id="SM00487">
    <property type="entry name" value="DEXDc"/>
    <property type="match status" value="1"/>
</dbReference>
<dbReference type="SMART" id="SM01178">
    <property type="entry name" value="DUF4217"/>
    <property type="match status" value="1"/>
</dbReference>
<dbReference type="SMART" id="SM00490">
    <property type="entry name" value="HELICc"/>
    <property type="match status" value="1"/>
</dbReference>
<dbReference type="SUPFAM" id="SSF52540">
    <property type="entry name" value="P-loop containing nucleoside triphosphate hydrolases"/>
    <property type="match status" value="2"/>
</dbReference>
<dbReference type="PROSITE" id="PS00039">
    <property type="entry name" value="DEAD_ATP_HELICASE"/>
    <property type="match status" value="1"/>
</dbReference>
<dbReference type="PROSITE" id="PS51192">
    <property type="entry name" value="HELICASE_ATP_BIND_1"/>
    <property type="match status" value="1"/>
</dbReference>
<dbReference type="PROSITE" id="PS51194">
    <property type="entry name" value="HELICASE_CTER"/>
    <property type="match status" value="1"/>
</dbReference>
<dbReference type="PROSITE" id="PS51195">
    <property type="entry name" value="Q_MOTIF"/>
    <property type="match status" value="1"/>
</dbReference>
<sequence length="626" mass="70178">MAIEGEKKKDPRAWDALTPSLAEWVLDAISSMGFEKMTPVQASTIPLFMGNKDVVVEAVTGSGKTLSFLIPVVEKLLRLEEPLKKHHVGAIIVSPTRELATQIHSVLTSLLKFHEPSAEALQPLEEGEKRKPSSTLRVIPQLLLGGTTTPAQDLSRFLKNSPNLLISTPGRLLELLSSPHVHCPQSSFEVLVLDEADRLLDLGFKDDLQKILGRLPKQRRTGLFSASVSEAVGEIVRVGLRNPVKIAVKVKGAGGGDKMTPASLQMSYLLTPPTHKFPALLSLLSQLEPTPQKSIIYLSTCAAVDYFQPLLEAVLPKQFGLVSLHGKHPPNVRQRNFSKYVAAVSPTILLTTDVAARGLDIPQVDLVVQIDPPSDPKVFLHRCGRAGRAGRKGLSVIFLQPGREEDYIPFLEIRKTPITPLKRPEISTTGEAAKILISKMRKEVLSDRALYDKGQRAFVSWVQAYSKHQASSIFRVADLDWTDLGNAWALVRLPKMPELKKWEGDKTLGIKLDMSEYAYKDKIREKARRVAMEEAKNAGPYVPTEEQIAKKKQREAWSQKHEKQDLKELKREKKKRKREIERLEKMTDEEKKEEQAKEKELQDLIEQVKKRKIEDDADVEFEGFAD</sequence>
<feature type="chain" id="PRO_0000310250" description="ATP-dependent rRNA helicase spb4">
    <location>
        <begin position="1"/>
        <end position="626"/>
    </location>
</feature>
<feature type="domain" description="Helicase ATP-binding" evidence="3">
    <location>
        <begin position="45"/>
        <end position="246"/>
    </location>
</feature>
<feature type="domain" description="Helicase C-terminal" evidence="4">
    <location>
        <begin position="279"/>
        <end position="437"/>
    </location>
</feature>
<feature type="region of interest" description="Disordered" evidence="5">
    <location>
        <begin position="553"/>
        <end position="599"/>
    </location>
</feature>
<feature type="coiled-coil region" evidence="2">
    <location>
        <begin position="558"/>
        <end position="620"/>
    </location>
</feature>
<feature type="short sequence motif" description="Q motif" evidence="6">
    <location>
        <begin position="14"/>
        <end position="42"/>
    </location>
</feature>
<feature type="short sequence motif" description="DEAD box" evidence="6">
    <location>
        <begin position="194"/>
        <end position="197"/>
    </location>
</feature>
<feature type="compositionally biased region" description="Basic and acidic residues" evidence="5">
    <location>
        <begin position="554"/>
        <end position="571"/>
    </location>
</feature>
<feature type="compositionally biased region" description="Basic and acidic residues" evidence="5">
    <location>
        <begin position="578"/>
        <end position="599"/>
    </location>
</feature>
<feature type="binding site" evidence="3">
    <location>
        <begin position="58"/>
        <end position="65"/>
    </location>
    <ligand>
        <name>ATP</name>
        <dbReference type="ChEBI" id="CHEBI:30616"/>
    </ligand>
</feature>
<keyword id="KW-0067">ATP-binding</keyword>
<keyword id="KW-0175">Coiled coil</keyword>
<keyword id="KW-0347">Helicase</keyword>
<keyword id="KW-0378">Hydrolase</keyword>
<keyword id="KW-0547">Nucleotide-binding</keyword>
<keyword id="KW-0539">Nucleus</keyword>
<keyword id="KW-1185">Reference proteome</keyword>
<keyword id="KW-0690">Ribosome biogenesis</keyword>
<keyword id="KW-0694">RNA-binding</keyword>
<keyword id="KW-0698">rRNA processing</keyword>
<gene>
    <name evidence="1" type="primary">spb4</name>
    <name type="ORF">BC1G_01814</name>
    <name type="ORF">BCIN_05g05740</name>
</gene>
<comment type="function">
    <text evidence="1">ATP-binding RNA helicase involved in the biogenesis of 60S ribosomal subunits. Binds 90S pre-ribosomal particles and dissociates from pre-60S ribosomal particles after processing of 27SB pre-rRNA. Required for the normal formation of 18S rRNA through the processing of pre-rRNAs at sites A0, A1 and A2, and the normal formation of 25S and 5.8S rRNAs through the processing of pre-rRNAs at sites C1 and C2.</text>
</comment>
<comment type="catalytic activity">
    <reaction evidence="1">
        <text>ATP + H2O = ADP + phosphate + H(+)</text>
        <dbReference type="Rhea" id="RHEA:13065"/>
        <dbReference type="ChEBI" id="CHEBI:15377"/>
        <dbReference type="ChEBI" id="CHEBI:15378"/>
        <dbReference type="ChEBI" id="CHEBI:30616"/>
        <dbReference type="ChEBI" id="CHEBI:43474"/>
        <dbReference type="ChEBI" id="CHEBI:456216"/>
        <dbReference type="EC" id="3.6.4.13"/>
    </reaction>
</comment>
<comment type="subunit">
    <text evidence="1">Component of pre-60S ribosomal complexes.</text>
</comment>
<comment type="subcellular location">
    <subcellularLocation>
        <location evidence="1">Nucleus</location>
        <location evidence="1">Nucleolus</location>
    </subcellularLocation>
</comment>
<comment type="domain">
    <text>The Q motif is unique to and characteristic of the DEAD box family of RNA helicases and controls ATP binding and hydrolysis.</text>
</comment>
<comment type="similarity">
    <text evidence="6">Belongs to the DEAD box helicase family. DDX55/SPB4 subfamily.</text>
</comment>
<name>SPB4_BOTFB</name>
<protein>
    <recommendedName>
        <fullName evidence="6">ATP-dependent rRNA helicase spb4</fullName>
        <ecNumber evidence="1">3.6.4.13</ecNumber>
    </recommendedName>
</protein>